<evidence type="ECO:0000250" key="1"/>
<evidence type="ECO:0000255" key="2"/>
<evidence type="ECO:0000305" key="3"/>
<dbReference type="EC" id="7.1.1.-"/>
<dbReference type="EMBL" id="DQ424856">
    <property type="protein sequence ID" value="ABE47582.1"/>
    <property type="molecule type" value="Genomic_DNA"/>
</dbReference>
<dbReference type="RefSeq" id="YP_567125.1">
    <property type="nucleotide sequence ID" value="NC_007957.1"/>
</dbReference>
<dbReference type="SMR" id="Q0ZIX1"/>
<dbReference type="FunCoup" id="Q0ZIX1">
    <property type="interactions" value="14"/>
</dbReference>
<dbReference type="STRING" id="29760.Q0ZIX1"/>
<dbReference type="PaxDb" id="29760-VIT_00s0246g00150.t01"/>
<dbReference type="GeneID" id="4025035"/>
<dbReference type="KEGG" id="vvi:4025035"/>
<dbReference type="eggNOG" id="KOG4668">
    <property type="taxonomic scope" value="Eukaryota"/>
</dbReference>
<dbReference type="InParanoid" id="Q0ZIX1"/>
<dbReference type="OrthoDB" id="870642at71240"/>
<dbReference type="Proteomes" id="UP000009183">
    <property type="component" value="Chloroplast"/>
</dbReference>
<dbReference type="ExpressionAtlas" id="Q0ZIX1">
    <property type="expression patterns" value="baseline and differential"/>
</dbReference>
<dbReference type="GO" id="GO:0009535">
    <property type="term" value="C:chloroplast thylakoid membrane"/>
    <property type="evidence" value="ECO:0007669"/>
    <property type="project" value="UniProtKB-SubCell"/>
</dbReference>
<dbReference type="GO" id="GO:0008137">
    <property type="term" value="F:NADH dehydrogenase (ubiquinone) activity"/>
    <property type="evidence" value="ECO:0007669"/>
    <property type="project" value="InterPro"/>
</dbReference>
<dbReference type="GO" id="GO:0048038">
    <property type="term" value="F:quinone binding"/>
    <property type="evidence" value="ECO:0007669"/>
    <property type="project" value="UniProtKB-KW"/>
</dbReference>
<dbReference type="GO" id="GO:0042773">
    <property type="term" value="P:ATP synthesis coupled electron transport"/>
    <property type="evidence" value="ECO:0007669"/>
    <property type="project" value="InterPro"/>
</dbReference>
<dbReference type="GO" id="GO:0015990">
    <property type="term" value="P:electron transport coupled proton transport"/>
    <property type="evidence" value="ECO:0000318"/>
    <property type="project" value="GO_Central"/>
</dbReference>
<dbReference type="Gene3D" id="1.20.5.2700">
    <property type="match status" value="1"/>
</dbReference>
<dbReference type="InterPro" id="IPR002128">
    <property type="entry name" value="NADH_UbQ_OxRdtase_chlpt_su5_C"/>
</dbReference>
<dbReference type="InterPro" id="IPR018393">
    <property type="entry name" value="NADHpl_OxRdtase_5_subgr"/>
</dbReference>
<dbReference type="InterPro" id="IPR001750">
    <property type="entry name" value="ND/Mrp_TM"/>
</dbReference>
<dbReference type="InterPro" id="IPR003945">
    <property type="entry name" value="NU5C-like"/>
</dbReference>
<dbReference type="InterPro" id="IPR001516">
    <property type="entry name" value="Proton_antipo_N"/>
</dbReference>
<dbReference type="NCBIfam" id="TIGR01974">
    <property type="entry name" value="NDH_I_L"/>
    <property type="match status" value="1"/>
</dbReference>
<dbReference type="NCBIfam" id="NF005141">
    <property type="entry name" value="PRK06590.1"/>
    <property type="match status" value="1"/>
</dbReference>
<dbReference type="PANTHER" id="PTHR42829">
    <property type="entry name" value="NADH-UBIQUINONE OXIDOREDUCTASE CHAIN 5"/>
    <property type="match status" value="1"/>
</dbReference>
<dbReference type="PANTHER" id="PTHR42829:SF2">
    <property type="entry name" value="NADH-UBIQUINONE OXIDOREDUCTASE CHAIN 5"/>
    <property type="match status" value="1"/>
</dbReference>
<dbReference type="Pfam" id="PF01010">
    <property type="entry name" value="Proton_antipo_C"/>
    <property type="match status" value="1"/>
</dbReference>
<dbReference type="Pfam" id="PF00361">
    <property type="entry name" value="Proton_antipo_M"/>
    <property type="match status" value="1"/>
</dbReference>
<dbReference type="Pfam" id="PF00662">
    <property type="entry name" value="Proton_antipo_N"/>
    <property type="match status" value="1"/>
</dbReference>
<dbReference type="PRINTS" id="PR01434">
    <property type="entry name" value="NADHDHGNASE5"/>
</dbReference>
<dbReference type="PRINTS" id="PR01435">
    <property type="entry name" value="NPOXDRDTASE5"/>
</dbReference>
<organism>
    <name type="scientific">Vitis vinifera</name>
    <name type="common">Grape</name>
    <dbReference type="NCBI Taxonomy" id="29760"/>
    <lineage>
        <taxon>Eukaryota</taxon>
        <taxon>Viridiplantae</taxon>
        <taxon>Streptophyta</taxon>
        <taxon>Embryophyta</taxon>
        <taxon>Tracheophyta</taxon>
        <taxon>Spermatophyta</taxon>
        <taxon>Magnoliopsida</taxon>
        <taxon>eudicotyledons</taxon>
        <taxon>Gunneridae</taxon>
        <taxon>Pentapetalae</taxon>
        <taxon>rosids</taxon>
        <taxon>Vitales</taxon>
        <taxon>Vitaceae</taxon>
        <taxon>Viteae</taxon>
        <taxon>Vitis</taxon>
    </lineage>
</organism>
<name>NU5C_VITVI</name>
<reference key="1">
    <citation type="journal article" date="2006" name="BMC Evol. Biol.">
        <title>Phylogenetic analyses of Vitis (Vitaceae) based on complete chloroplast genome sequences: effects of taxon sampling and phylogenetic methods on resolving relationships among rosids.</title>
        <authorList>
            <person name="Jansen R.K."/>
            <person name="Kaittanis C."/>
            <person name="Lee S.-B."/>
            <person name="Saski C."/>
            <person name="Tomkins J."/>
            <person name="Alverson A.J."/>
            <person name="Daniell H."/>
        </authorList>
    </citation>
    <scope>NUCLEOTIDE SEQUENCE [LARGE SCALE GENOMIC DNA]</scope>
    <source>
        <strain>cv. Maxxa</strain>
    </source>
</reference>
<accession>Q0ZIX1</accession>
<feature type="chain" id="PRO_0000360974" description="NAD(P)H-quinone oxidoreductase subunit 5, chloroplastic">
    <location>
        <begin position="1"/>
        <end position="749"/>
    </location>
</feature>
<feature type="transmembrane region" description="Helical" evidence="2">
    <location>
        <begin position="9"/>
        <end position="29"/>
    </location>
</feature>
<feature type="transmembrane region" description="Helical" evidence="2">
    <location>
        <begin position="40"/>
        <end position="60"/>
    </location>
</feature>
<feature type="transmembrane region" description="Helical" evidence="2">
    <location>
        <begin position="89"/>
        <end position="109"/>
    </location>
</feature>
<feature type="transmembrane region" description="Helical" evidence="2">
    <location>
        <begin position="125"/>
        <end position="145"/>
    </location>
</feature>
<feature type="transmembrane region" description="Helical" evidence="2">
    <location>
        <begin position="147"/>
        <end position="167"/>
    </location>
</feature>
<feature type="transmembrane region" description="Helical" evidence="2">
    <location>
        <begin position="185"/>
        <end position="205"/>
    </location>
</feature>
<feature type="transmembrane region" description="Helical" evidence="2">
    <location>
        <begin position="221"/>
        <end position="241"/>
    </location>
</feature>
<feature type="transmembrane region" description="Helical" evidence="2">
    <location>
        <begin position="260"/>
        <end position="280"/>
    </location>
</feature>
<feature type="transmembrane region" description="Helical" evidence="2">
    <location>
        <begin position="285"/>
        <end position="305"/>
    </location>
</feature>
<feature type="transmembrane region" description="Helical" evidence="2">
    <location>
        <begin position="329"/>
        <end position="349"/>
    </location>
</feature>
<feature type="transmembrane region" description="Helical" evidence="2">
    <location>
        <begin position="356"/>
        <end position="376"/>
    </location>
</feature>
<feature type="transmembrane region" description="Helical" evidence="2">
    <location>
        <begin position="398"/>
        <end position="418"/>
    </location>
</feature>
<feature type="transmembrane region" description="Helical" evidence="2">
    <location>
        <begin position="427"/>
        <end position="447"/>
    </location>
</feature>
<feature type="transmembrane region" description="Helical" evidence="2">
    <location>
        <begin position="553"/>
        <end position="573"/>
    </location>
</feature>
<feature type="transmembrane region" description="Helical" evidence="2">
    <location>
        <begin position="607"/>
        <end position="627"/>
    </location>
</feature>
<feature type="transmembrane region" description="Helical" evidence="2">
    <location>
        <begin position="727"/>
        <end position="747"/>
    </location>
</feature>
<protein>
    <recommendedName>
        <fullName>NAD(P)H-quinone oxidoreductase subunit 5, chloroplastic</fullName>
        <ecNumber>7.1.1.-</ecNumber>
    </recommendedName>
    <alternativeName>
        <fullName>NAD(P)H dehydrogenase subunit 5</fullName>
    </alternativeName>
    <alternativeName>
        <fullName>NADH-plastoquinone oxidoreductase subunit 5</fullName>
    </alternativeName>
</protein>
<keyword id="KW-0150">Chloroplast</keyword>
<keyword id="KW-0472">Membrane</keyword>
<keyword id="KW-0520">NAD</keyword>
<keyword id="KW-0521">NADP</keyword>
<keyword id="KW-0934">Plastid</keyword>
<keyword id="KW-0618">Plastoquinone</keyword>
<keyword id="KW-0874">Quinone</keyword>
<keyword id="KW-1185">Reference proteome</keyword>
<keyword id="KW-0793">Thylakoid</keyword>
<keyword id="KW-1278">Translocase</keyword>
<keyword id="KW-0812">Transmembrane</keyword>
<keyword id="KW-1133">Transmembrane helix</keyword>
<keyword id="KW-0813">Transport</keyword>
<gene>
    <name type="primary">ndhF</name>
</gene>
<proteinExistence type="inferred from homology"/>
<comment type="function">
    <text evidence="1">NDH shuttles electrons from NAD(P)H:plastoquinone, via FMN and iron-sulfur (Fe-S) centers, to quinones in the photosynthetic chain and possibly in a chloroplast respiratory chain. The immediate electron acceptor for the enzyme in this species is believed to be plastoquinone. Couples the redox reaction to proton translocation, and thus conserves the redox energy in a proton gradient (By similarity).</text>
</comment>
<comment type="catalytic activity">
    <reaction>
        <text>a plastoquinone + NADH + (n+1) H(+)(in) = a plastoquinol + NAD(+) + n H(+)(out)</text>
        <dbReference type="Rhea" id="RHEA:42608"/>
        <dbReference type="Rhea" id="RHEA-COMP:9561"/>
        <dbReference type="Rhea" id="RHEA-COMP:9562"/>
        <dbReference type="ChEBI" id="CHEBI:15378"/>
        <dbReference type="ChEBI" id="CHEBI:17757"/>
        <dbReference type="ChEBI" id="CHEBI:57540"/>
        <dbReference type="ChEBI" id="CHEBI:57945"/>
        <dbReference type="ChEBI" id="CHEBI:62192"/>
    </reaction>
</comment>
<comment type="catalytic activity">
    <reaction>
        <text>a plastoquinone + NADPH + (n+1) H(+)(in) = a plastoquinol + NADP(+) + n H(+)(out)</text>
        <dbReference type="Rhea" id="RHEA:42612"/>
        <dbReference type="Rhea" id="RHEA-COMP:9561"/>
        <dbReference type="Rhea" id="RHEA-COMP:9562"/>
        <dbReference type="ChEBI" id="CHEBI:15378"/>
        <dbReference type="ChEBI" id="CHEBI:17757"/>
        <dbReference type="ChEBI" id="CHEBI:57783"/>
        <dbReference type="ChEBI" id="CHEBI:58349"/>
        <dbReference type="ChEBI" id="CHEBI:62192"/>
    </reaction>
</comment>
<comment type="subunit">
    <text evidence="1">NDH is composed of at least 16 different subunits, 5 of which are encoded in the nucleus.</text>
</comment>
<comment type="subcellular location">
    <subcellularLocation>
        <location evidence="1">Plastid</location>
        <location evidence="1">Chloroplast thylakoid membrane</location>
        <topology evidence="1">Multi-pass membrane protein</topology>
    </subcellularLocation>
</comment>
<comment type="similarity">
    <text evidence="3">Belongs to the complex I subunit 5 family.</text>
</comment>
<geneLocation type="chloroplast"/>
<sequence>MEHTYQYAWIIPFLPLPIPMLLGVGLLLFPTATKNLRRMWSFTSVLLLSIVMTFSVNLSIHQINSSSIYQYVWSWTINNDFSLEFGYLIDPLTSIMSILITTVGIMVLIYSDNYMSHDQGYLRFFAYMSFFNASMLGLVTSSNLIQIYIFWELVGMCSYLLIGFWFTRPIAANACQKAFVTNRVGDFGLLLGILGLYWITGSFEFRDLFEIFNNLIYNYNNGTNFLFVSLCALFLFVGAVAKSAQFPLHVWLPDAMEGPTPISALIHAATMVAAGIFLVARLFPLFIVIPYIMNLISLIGIITILLGATLALAQKDIKKSLAYSTMSQLGYTMLALGMGSYRAALFHLITHAYSKALLFLGSGSIIHSMEAIVGYSPDKSQNMVLMGGLTKHVPITKNTFLLGTLSLCGIPPLACFWSKDEILNDSWLYSPIFAIIACLTAGLTAFYMFRIYLLTFEGYFNVHCKNYSGKKSSLFYSISLWGKEGQKTIKKKIRLLTLLTTNNNENEKASFFSKKVYRLDSNVRKMTRPFITINQFDNKNTFLYPQESDNTMLFPLFALALFTLFVGAIGIPFNQERMDFDILSKWLNPATNLLHKNLNNYGDWYEFVINAIFSVSISYFGIFLASLLYNPVYSSLQNLDLINSVAKKVPKRIFWDKIINKVYNWSYNRGYIDAFYETSLTKGIRGLAELTHFFDGRVIDGITNGVGVTSFFVGESIKYVGGGRISSYLFLYLSSVSILLLISYFFLNQ</sequence>